<sequence>MSRNAELFERASRSIPGGVNSPVRAFRSVGGTPRFIKRALGPHIWDADGKQYIDYLGSWGPAILGHAHPEVVRAVQDAATGGLSFGAPTEAEVELAELLIQRLPSMEQVRLVSSGTEATMTAIRLARGATGRNKIIKFEGCYHGHSDSLLVKAGSGLLTLGNPSSAGVPPEFVAHTITLDYNNLPAVQTAFAEHGRDIACVIVEPVAGNMNLIKPAAGFLEGLRELCTRHGSVLIFDEVMTGFRVGPQGVQGLTGITPDLTTLAKVIGGGMPVGAFGGRADLMRHIAPLGSVYQAGTLSGNPVAVAAGLATLRLIGQPGFYEDLSARTQRLALGLTERAHAAGVTFSADAIGGMFGLYFRDKVPTSFAEVQTSNTEAFKRFFHAMLDRGVHFAPSAFEAGFVSAAHDDATLQATLDHAEAAFALLKA</sequence>
<accession>Q2KUS4</accession>
<proteinExistence type="inferred from homology"/>
<name>GSA_BORA1</name>
<keyword id="KW-0963">Cytoplasm</keyword>
<keyword id="KW-0413">Isomerase</keyword>
<keyword id="KW-0627">Porphyrin biosynthesis</keyword>
<keyword id="KW-0663">Pyridoxal phosphate</keyword>
<keyword id="KW-1185">Reference proteome</keyword>
<feature type="chain" id="PRO_0000243550" description="Glutamate-1-semialdehyde 2,1-aminomutase">
    <location>
        <begin position="1"/>
        <end position="427"/>
    </location>
</feature>
<feature type="modified residue" description="N6-(pyridoxal phosphate)lysine" evidence="1">
    <location>
        <position position="265"/>
    </location>
</feature>
<organism>
    <name type="scientific">Bordetella avium (strain 197N)</name>
    <dbReference type="NCBI Taxonomy" id="360910"/>
    <lineage>
        <taxon>Bacteria</taxon>
        <taxon>Pseudomonadati</taxon>
        <taxon>Pseudomonadota</taxon>
        <taxon>Betaproteobacteria</taxon>
        <taxon>Burkholderiales</taxon>
        <taxon>Alcaligenaceae</taxon>
        <taxon>Bordetella</taxon>
    </lineage>
</organism>
<protein>
    <recommendedName>
        <fullName evidence="1">Glutamate-1-semialdehyde 2,1-aminomutase</fullName>
        <shortName evidence="1">GSA</shortName>
        <ecNumber evidence="1">5.4.3.8</ecNumber>
    </recommendedName>
    <alternativeName>
        <fullName evidence="1">Glutamate-1-semialdehyde aminotransferase</fullName>
        <shortName evidence="1">GSA-AT</shortName>
    </alternativeName>
</protein>
<comment type="catalytic activity">
    <reaction evidence="1">
        <text>(S)-4-amino-5-oxopentanoate = 5-aminolevulinate</text>
        <dbReference type="Rhea" id="RHEA:14265"/>
        <dbReference type="ChEBI" id="CHEBI:57501"/>
        <dbReference type="ChEBI" id="CHEBI:356416"/>
        <dbReference type="EC" id="5.4.3.8"/>
    </reaction>
</comment>
<comment type="cofactor">
    <cofactor evidence="1">
        <name>pyridoxal 5'-phosphate</name>
        <dbReference type="ChEBI" id="CHEBI:597326"/>
    </cofactor>
</comment>
<comment type="pathway">
    <text evidence="1">Porphyrin-containing compound metabolism; protoporphyrin-IX biosynthesis; 5-aminolevulinate from L-glutamyl-tRNA(Glu): step 2/2.</text>
</comment>
<comment type="subunit">
    <text evidence="1">Homodimer.</text>
</comment>
<comment type="subcellular location">
    <subcellularLocation>
        <location evidence="1">Cytoplasm</location>
    </subcellularLocation>
</comment>
<comment type="similarity">
    <text evidence="1">Belongs to the class-III pyridoxal-phosphate-dependent aminotransferase family. HemL subfamily.</text>
</comment>
<evidence type="ECO:0000255" key="1">
    <source>
        <dbReference type="HAMAP-Rule" id="MF_00375"/>
    </source>
</evidence>
<gene>
    <name evidence="1" type="primary">hemL</name>
    <name type="ordered locus">BAV3016</name>
</gene>
<reference key="1">
    <citation type="journal article" date="2006" name="J. Bacteriol.">
        <title>Comparison of the genome sequence of the poultry pathogen Bordetella avium with those of B. bronchiseptica, B. pertussis, and B. parapertussis reveals extensive diversity in surface structures associated with host interaction.</title>
        <authorList>
            <person name="Sebaihia M."/>
            <person name="Preston A."/>
            <person name="Maskell D.J."/>
            <person name="Kuzmiak H."/>
            <person name="Connell T.D."/>
            <person name="King N.D."/>
            <person name="Orndorff P.E."/>
            <person name="Miyamoto D.M."/>
            <person name="Thomson N.R."/>
            <person name="Harris D."/>
            <person name="Goble A."/>
            <person name="Lord A."/>
            <person name="Murphy L."/>
            <person name="Quail M.A."/>
            <person name="Rutter S."/>
            <person name="Squares R."/>
            <person name="Squares S."/>
            <person name="Woodward J."/>
            <person name="Parkhill J."/>
            <person name="Temple L.M."/>
        </authorList>
    </citation>
    <scope>NUCLEOTIDE SEQUENCE [LARGE SCALE GENOMIC DNA]</scope>
    <source>
        <strain>197N</strain>
    </source>
</reference>
<dbReference type="EC" id="5.4.3.8" evidence="1"/>
<dbReference type="EMBL" id="AM167904">
    <property type="protein sequence ID" value="CAJ50626.1"/>
    <property type="molecule type" value="Genomic_DNA"/>
</dbReference>
<dbReference type="RefSeq" id="WP_012418654.1">
    <property type="nucleotide sequence ID" value="NC_010645.1"/>
</dbReference>
<dbReference type="SMR" id="Q2KUS4"/>
<dbReference type="STRING" id="360910.BAV3016"/>
<dbReference type="KEGG" id="bav:BAV3016"/>
<dbReference type="eggNOG" id="COG0001">
    <property type="taxonomic scope" value="Bacteria"/>
</dbReference>
<dbReference type="HOGENOM" id="CLU_016922_1_5_4"/>
<dbReference type="OrthoDB" id="3398487at2"/>
<dbReference type="UniPathway" id="UPA00251">
    <property type="reaction ID" value="UER00317"/>
</dbReference>
<dbReference type="Proteomes" id="UP000001977">
    <property type="component" value="Chromosome"/>
</dbReference>
<dbReference type="GO" id="GO:0005737">
    <property type="term" value="C:cytoplasm"/>
    <property type="evidence" value="ECO:0007669"/>
    <property type="project" value="UniProtKB-SubCell"/>
</dbReference>
<dbReference type="GO" id="GO:0042286">
    <property type="term" value="F:glutamate-1-semialdehyde 2,1-aminomutase activity"/>
    <property type="evidence" value="ECO:0007669"/>
    <property type="project" value="UniProtKB-UniRule"/>
</dbReference>
<dbReference type="GO" id="GO:0030170">
    <property type="term" value="F:pyridoxal phosphate binding"/>
    <property type="evidence" value="ECO:0007669"/>
    <property type="project" value="InterPro"/>
</dbReference>
<dbReference type="GO" id="GO:0008483">
    <property type="term" value="F:transaminase activity"/>
    <property type="evidence" value="ECO:0007669"/>
    <property type="project" value="InterPro"/>
</dbReference>
<dbReference type="GO" id="GO:0006782">
    <property type="term" value="P:protoporphyrinogen IX biosynthetic process"/>
    <property type="evidence" value="ECO:0007669"/>
    <property type="project" value="UniProtKB-UniRule"/>
</dbReference>
<dbReference type="CDD" id="cd00610">
    <property type="entry name" value="OAT_like"/>
    <property type="match status" value="1"/>
</dbReference>
<dbReference type="FunFam" id="3.40.640.10:FF:000021">
    <property type="entry name" value="Glutamate-1-semialdehyde 2,1-aminomutase"/>
    <property type="match status" value="1"/>
</dbReference>
<dbReference type="Gene3D" id="3.90.1150.10">
    <property type="entry name" value="Aspartate Aminotransferase, domain 1"/>
    <property type="match status" value="1"/>
</dbReference>
<dbReference type="Gene3D" id="3.40.640.10">
    <property type="entry name" value="Type I PLP-dependent aspartate aminotransferase-like (Major domain)"/>
    <property type="match status" value="1"/>
</dbReference>
<dbReference type="HAMAP" id="MF_00375">
    <property type="entry name" value="HemL_aminotrans_3"/>
    <property type="match status" value="1"/>
</dbReference>
<dbReference type="InterPro" id="IPR004639">
    <property type="entry name" value="4pyrrol_synth_GluAld_NH2Trfase"/>
</dbReference>
<dbReference type="InterPro" id="IPR005814">
    <property type="entry name" value="Aminotrans_3"/>
</dbReference>
<dbReference type="InterPro" id="IPR049704">
    <property type="entry name" value="Aminotrans_3_PPA_site"/>
</dbReference>
<dbReference type="InterPro" id="IPR015424">
    <property type="entry name" value="PyrdxlP-dep_Trfase"/>
</dbReference>
<dbReference type="InterPro" id="IPR015421">
    <property type="entry name" value="PyrdxlP-dep_Trfase_major"/>
</dbReference>
<dbReference type="InterPro" id="IPR015422">
    <property type="entry name" value="PyrdxlP-dep_Trfase_small"/>
</dbReference>
<dbReference type="NCBIfam" id="TIGR00713">
    <property type="entry name" value="hemL"/>
    <property type="match status" value="1"/>
</dbReference>
<dbReference type="NCBIfam" id="NF000818">
    <property type="entry name" value="PRK00062.1"/>
    <property type="match status" value="1"/>
</dbReference>
<dbReference type="PANTHER" id="PTHR43713">
    <property type="entry name" value="GLUTAMATE-1-SEMIALDEHYDE 2,1-AMINOMUTASE"/>
    <property type="match status" value="1"/>
</dbReference>
<dbReference type="PANTHER" id="PTHR43713:SF3">
    <property type="entry name" value="GLUTAMATE-1-SEMIALDEHYDE 2,1-AMINOMUTASE 1, CHLOROPLASTIC-RELATED"/>
    <property type="match status" value="1"/>
</dbReference>
<dbReference type="Pfam" id="PF00202">
    <property type="entry name" value="Aminotran_3"/>
    <property type="match status" value="1"/>
</dbReference>
<dbReference type="SUPFAM" id="SSF53383">
    <property type="entry name" value="PLP-dependent transferases"/>
    <property type="match status" value="1"/>
</dbReference>
<dbReference type="PROSITE" id="PS00600">
    <property type="entry name" value="AA_TRANSFER_CLASS_3"/>
    <property type="match status" value="1"/>
</dbReference>